<proteinExistence type="evidence at transcript level"/>
<accession>Q2T9X1</accession>
<gene>
    <name type="primary">POLR3H</name>
</gene>
<protein>
    <recommendedName>
        <fullName>DNA-directed RNA polymerase III subunit RPC8</fullName>
        <shortName>RNA polymerase III subunit C8</shortName>
    </recommendedName>
    <alternativeName>
        <fullName>DNA-directed RNA polymerase III subunit 22.9 kDa polypeptide</fullName>
    </alternativeName>
    <alternativeName>
        <fullName>DNA-directed RNA polymerase III subunit H</fullName>
    </alternativeName>
</protein>
<keyword id="KW-0051">Antiviral defense</keyword>
<keyword id="KW-0240">DNA-directed RNA polymerase</keyword>
<keyword id="KW-0391">Immunity</keyword>
<keyword id="KW-0399">Innate immunity</keyword>
<keyword id="KW-0539">Nucleus</keyword>
<keyword id="KW-1185">Reference proteome</keyword>
<keyword id="KW-0804">Transcription</keyword>
<evidence type="ECO:0000250" key="1"/>
<evidence type="ECO:0000250" key="2">
    <source>
        <dbReference type="UniProtKB" id="O94285"/>
    </source>
</evidence>
<evidence type="ECO:0000250" key="3">
    <source>
        <dbReference type="UniProtKB" id="Q9Y535"/>
    </source>
</evidence>
<evidence type="ECO:0000256" key="4">
    <source>
        <dbReference type="SAM" id="MobiDB-lite"/>
    </source>
</evidence>
<evidence type="ECO:0000305" key="5"/>
<sequence length="204" mass="23027">MFVLVEMVDTVRIPPWQFERKLNDSIDEELNKKLANKVMYNVGLCICLFDITKLEDAYVFPGDGASHTKVHFRYVVFHPFLDEILIGKIKGCSPEGVHVSLGFFDDILIPPESLQQPAKFDEAEQVWVWEYETEEGAHDLYMDIGEEVRFRVVDESFVDTSPTGPSSAEAASSSEELPKKEAPYTLMGSISEPGLGLLSWWTSS</sequence>
<comment type="function">
    <text evidence="1 2 3">DNA-dependent RNA polymerase catalyzes the transcription of DNA into RNA using the four ribonucleoside triphosphates as substrates (By similarity). Specific peripheric component of RNA polymerase III (Pol III) which synthesizes small non-coding RNAs including 5S rRNA, snRNAs, tRNAs and miRNAs from at least 500 distinct genomic loci. With CRCP/RPC9 forms a mobile stalk that protrudes from Pol III core and functions primarily in transcription initiation (By similarity). Pol III plays a key role in sensing and limiting infection by intracellular bacteria and DNA viruses. Acts as nuclear and cytosolic DNA sensor involved in innate immune response. Can sense non-self dsDNA that serves as template for transcription into dsRNA. The non-self RNA polymerase III transcripts, such as Epstein-Barr virus-encoded RNAs (EBERs) induce type I interferon and NF-kappa-B through the RIG-I pathway (By similarity).</text>
</comment>
<comment type="subunit">
    <text evidence="3">Component of the RNA polymerase III complex consisting of 17 subunits: a ten-subunit horseshoe-shaped catalytic core composed of POLR3A/RPC1, POLR3B/RPC2, POLR1C/RPAC1, POLR1D/RPAC2, POLR3K/RPC10, POLR2E/RPABC1, POLR2F/RPABC2, POLR2H/RPABC3, POLR2K/RPABC4 and POLR2L/RPABC5; a mobile stalk composed of two subunits POLR3H/RPC8 and CRCP/RPC9, protruding from the core and functioning primarily in transcription initiation; and additional subunits homologous to general transcription factors of the RNA polymerase II machinery, POLR3C/RPC3-POLR3F/RPC6-POLR3G/RPC7 heterotrimer required for transcription initiation and POLR3D/RPC4-POLR3E/RPC5 heterodimer involved in both transcription initiation and termination. Interacts with CRCP/RPC9. POLR3H/RPC8 and CRCP/RPC9 probably form a Pol III subcomplex.</text>
</comment>
<comment type="subcellular location">
    <subcellularLocation>
        <location evidence="3">Nucleus</location>
    </subcellularLocation>
</comment>
<comment type="similarity">
    <text evidence="5">Belongs to the eukaryotic RPB7/RPC8 RNA polymerase subunit family.</text>
</comment>
<dbReference type="EMBL" id="BC111227">
    <property type="protein sequence ID" value="AAI11228.1"/>
    <property type="molecule type" value="mRNA"/>
</dbReference>
<dbReference type="RefSeq" id="NP_001070430.1">
    <property type="nucleotide sequence ID" value="NM_001076962.2"/>
</dbReference>
<dbReference type="SMR" id="Q2T9X1"/>
<dbReference type="FunCoup" id="Q2T9X1">
    <property type="interactions" value="3870"/>
</dbReference>
<dbReference type="STRING" id="9913.ENSBTAP00000006987"/>
<dbReference type="PaxDb" id="9913-ENSBTAP00000006987"/>
<dbReference type="GeneID" id="767843"/>
<dbReference type="KEGG" id="bta:767843"/>
<dbReference type="CTD" id="171568"/>
<dbReference type="eggNOG" id="KOG3297">
    <property type="taxonomic scope" value="Eukaryota"/>
</dbReference>
<dbReference type="InParanoid" id="Q2T9X1"/>
<dbReference type="OrthoDB" id="10256606at2759"/>
<dbReference type="Proteomes" id="UP000009136">
    <property type="component" value="Unplaced"/>
</dbReference>
<dbReference type="GO" id="GO:0005666">
    <property type="term" value="C:RNA polymerase III complex"/>
    <property type="evidence" value="ECO:0000318"/>
    <property type="project" value="GO_Central"/>
</dbReference>
<dbReference type="GO" id="GO:0003677">
    <property type="term" value="F:DNA binding"/>
    <property type="evidence" value="ECO:0007669"/>
    <property type="project" value="InterPro"/>
</dbReference>
<dbReference type="GO" id="GO:0003899">
    <property type="term" value="F:DNA-directed RNA polymerase activity"/>
    <property type="evidence" value="ECO:0007669"/>
    <property type="project" value="InterPro"/>
</dbReference>
<dbReference type="GO" id="GO:0051607">
    <property type="term" value="P:defense response to virus"/>
    <property type="evidence" value="ECO:0007669"/>
    <property type="project" value="UniProtKB-KW"/>
</dbReference>
<dbReference type="GO" id="GO:0045087">
    <property type="term" value="P:innate immune response"/>
    <property type="evidence" value="ECO:0007669"/>
    <property type="project" value="UniProtKB-KW"/>
</dbReference>
<dbReference type="GO" id="GO:0006384">
    <property type="term" value="P:transcription initiation at RNA polymerase III promoter"/>
    <property type="evidence" value="ECO:0000318"/>
    <property type="project" value="GO_Central"/>
</dbReference>
<dbReference type="CDD" id="cd04330">
    <property type="entry name" value="RNAP_III_Rpc25_N"/>
    <property type="match status" value="1"/>
</dbReference>
<dbReference type="FunFam" id="2.40.50.140:FF:000130">
    <property type="entry name" value="DNA-directed RNA polymerase III subunit RPC8"/>
    <property type="match status" value="1"/>
</dbReference>
<dbReference type="FunFam" id="3.30.1490.120:FF:000002">
    <property type="entry name" value="DNA-directed RNA polymerase III subunit RPC8"/>
    <property type="match status" value="1"/>
</dbReference>
<dbReference type="Gene3D" id="2.40.50.140">
    <property type="entry name" value="Nucleic acid-binding proteins"/>
    <property type="match status" value="1"/>
</dbReference>
<dbReference type="Gene3D" id="3.30.1490.120">
    <property type="entry name" value="RNA polymerase Rpb7-like, N-terminal domain"/>
    <property type="match status" value="1"/>
</dbReference>
<dbReference type="InterPro" id="IPR012340">
    <property type="entry name" value="NA-bd_OB-fold"/>
</dbReference>
<dbReference type="InterPro" id="IPR013238">
    <property type="entry name" value="RNA_pol_III_Rbc25"/>
</dbReference>
<dbReference type="InterPro" id="IPR036898">
    <property type="entry name" value="RNA_pol_Rpb7-like_N_sf"/>
</dbReference>
<dbReference type="InterPro" id="IPR004519">
    <property type="entry name" value="RNAP_E/RPC8"/>
</dbReference>
<dbReference type="InterPro" id="IPR045113">
    <property type="entry name" value="Rpb7-like"/>
</dbReference>
<dbReference type="InterPro" id="IPR005576">
    <property type="entry name" value="Rpb7-like_N"/>
</dbReference>
<dbReference type="NCBIfam" id="TIGR00448">
    <property type="entry name" value="rpoE"/>
    <property type="match status" value="1"/>
</dbReference>
<dbReference type="PANTHER" id="PTHR12709">
    <property type="entry name" value="DNA-DIRECTED RNA POLYMERASE II, III"/>
    <property type="match status" value="1"/>
</dbReference>
<dbReference type="PANTHER" id="PTHR12709:SF1">
    <property type="entry name" value="DNA-DIRECTED RNA POLYMERASE III SUBUNIT RPC8"/>
    <property type="match status" value="1"/>
</dbReference>
<dbReference type="Pfam" id="PF08292">
    <property type="entry name" value="RNA_pol_Rbc25"/>
    <property type="match status" value="1"/>
</dbReference>
<dbReference type="Pfam" id="PF03876">
    <property type="entry name" value="SHS2_Rpb7-N"/>
    <property type="match status" value="1"/>
</dbReference>
<dbReference type="SUPFAM" id="SSF88798">
    <property type="entry name" value="N-terminal, heterodimerisation domain of RBP7 (RpoE)"/>
    <property type="match status" value="1"/>
</dbReference>
<dbReference type="SUPFAM" id="SSF50249">
    <property type="entry name" value="Nucleic acid-binding proteins"/>
    <property type="match status" value="1"/>
</dbReference>
<feature type="chain" id="PRO_0000285782" description="DNA-directed RNA polymerase III subunit RPC8">
    <location>
        <begin position="1"/>
        <end position="204"/>
    </location>
</feature>
<feature type="region of interest" description="Disordered" evidence="4">
    <location>
        <begin position="158"/>
        <end position="178"/>
    </location>
</feature>
<feature type="compositionally biased region" description="Low complexity" evidence="4">
    <location>
        <begin position="166"/>
        <end position="175"/>
    </location>
</feature>
<reference key="1">
    <citation type="submission" date="2005-12" db="EMBL/GenBank/DDBJ databases">
        <authorList>
            <consortium name="NIH - Mammalian Gene Collection (MGC) project"/>
        </authorList>
    </citation>
    <scope>NUCLEOTIDE SEQUENCE [LARGE SCALE MRNA]</scope>
    <source>
        <strain>Crossbred X Angus</strain>
        <tissue>Liver</tissue>
    </source>
</reference>
<organism>
    <name type="scientific">Bos taurus</name>
    <name type="common">Bovine</name>
    <dbReference type="NCBI Taxonomy" id="9913"/>
    <lineage>
        <taxon>Eukaryota</taxon>
        <taxon>Metazoa</taxon>
        <taxon>Chordata</taxon>
        <taxon>Craniata</taxon>
        <taxon>Vertebrata</taxon>
        <taxon>Euteleostomi</taxon>
        <taxon>Mammalia</taxon>
        <taxon>Eutheria</taxon>
        <taxon>Laurasiatheria</taxon>
        <taxon>Artiodactyla</taxon>
        <taxon>Ruminantia</taxon>
        <taxon>Pecora</taxon>
        <taxon>Bovidae</taxon>
        <taxon>Bovinae</taxon>
        <taxon>Bos</taxon>
    </lineage>
</organism>
<name>RPC8_BOVIN</name>